<organism>
    <name type="scientific">Vibrio atlanticus (strain LGP32)</name>
    <name type="common">Vibrio splendidus (strain Mel32)</name>
    <dbReference type="NCBI Taxonomy" id="575788"/>
    <lineage>
        <taxon>Bacteria</taxon>
        <taxon>Pseudomonadati</taxon>
        <taxon>Pseudomonadota</taxon>
        <taxon>Gammaproteobacteria</taxon>
        <taxon>Vibrionales</taxon>
        <taxon>Vibrionaceae</taxon>
        <taxon>Vibrio</taxon>
    </lineage>
</organism>
<protein>
    <recommendedName>
        <fullName evidence="1">Soluble pyridine nucleotide transhydrogenase</fullName>
        <shortName evidence="1">STH</shortName>
        <ecNumber evidence="1">1.6.1.1</ecNumber>
    </recommendedName>
    <alternativeName>
        <fullName evidence="1">NAD(P)(+) transhydrogenase [B-specific]</fullName>
    </alternativeName>
</protein>
<sequence length="466" mass="51109">MSHSNHFDVIVIGSGPGGEGAAMGLTKAGLNVAIIEKESSVGGGCTHWGTIPSKALRHAVSRIIEFNSNPLFCQNNKSIHSTFSNILGHAKSVIDKQTRLRQGFYDRNQCTLVFGTARFIDTHTISVMQSDGTEEHYSADKFVIATGSRPYQPDNVDFMHERVYDSDSILSLKHDPQHIIIYGAGVIGCEYASIFRGLGVKTDLINTRDRLLSFLDNETSDALSYHFWNSGVVIRNDETFEKIEGTDDGVIIHLESGKKMRADCLLYANGRTGNTDKLNLGAVGLEADSRGQVSVNSNYQTSVEHVYAVGDVIGYPSLASAAYDQGRFVAQAVVKGEAERHLIEDIPTGIYTIPEISSVGKTEQELTAAKVPYEVGRSSFKHLARAQIAGKDIGSLKILFHRETKEILGIHVFGERAAEIIHIGQAIMEQKGEANTIEYFVNTTFNYPTMAEAYRVAALNGLNRLF</sequence>
<evidence type="ECO:0000255" key="1">
    <source>
        <dbReference type="HAMAP-Rule" id="MF_00247"/>
    </source>
</evidence>
<accession>B7VM91</accession>
<comment type="function">
    <text evidence="1">Conversion of NADPH, generated by peripheral catabolic pathways, to NADH, which can enter the respiratory chain for energy generation.</text>
</comment>
<comment type="catalytic activity">
    <reaction evidence="1">
        <text>NAD(+) + NADPH = NADH + NADP(+)</text>
        <dbReference type="Rhea" id="RHEA:11692"/>
        <dbReference type="ChEBI" id="CHEBI:57540"/>
        <dbReference type="ChEBI" id="CHEBI:57783"/>
        <dbReference type="ChEBI" id="CHEBI:57945"/>
        <dbReference type="ChEBI" id="CHEBI:58349"/>
        <dbReference type="EC" id="1.6.1.1"/>
    </reaction>
</comment>
<comment type="cofactor">
    <cofactor evidence="1">
        <name>FAD</name>
        <dbReference type="ChEBI" id="CHEBI:57692"/>
    </cofactor>
    <text evidence="1">Binds 1 FAD per subunit.</text>
</comment>
<comment type="subcellular location">
    <subcellularLocation>
        <location evidence="1">Cytoplasm</location>
    </subcellularLocation>
</comment>
<comment type="similarity">
    <text evidence="1">Belongs to the class-I pyridine nucleotide-disulfide oxidoreductase family.</text>
</comment>
<dbReference type="EC" id="1.6.1.1" evidence="1"/>
<dbReference type="EMBL" id="FM954972">
    <property type="protein sequence ID" value="CAV20281.1"/>
    <property type="molecule type" value="Genomic_DNA"/>
</dbReference>
<dbReference type="SMR" id="B7VM91"/>
<dbReference type="STRING" id="575788.VS_3003"/>
<dbReference type="KEGG" id="vsp:VS_3003"/>
<dbReference type="eggNOG" id="COG1249">
    <property type="taxonomic scope" value="Bacteria"/>
</dbReference>
<dbReference type="HOGENOM" id="CLU_016755_0_0_6"/>
<dbReference type="Proteomes" id="UP000009100">
    <property type="component" value="Chromosome 1"/>
</dbReference>
<dbReference type="GO" id="GO:0005829">
    <property type="term" value="C:cytosol"/>
    <property type="evidence" value="ECO:0007669"/>
    <property type="project" value="TreeGrafter"/>
</dbReference>
<dbReference type="GO" id="GO:0004148">
    <property type="term" value="F:dihydrolipoyl dehydrogenase (NADH) activity"/>
    <property type="evidence" value="ECO:0007669"/>
    <property type="project" value="TreeGrafter"/>
</dbReference>
<dbReference type="GO" id="GO:0050660">
    <property type="term" value="F:flavin adenine dinucleotide binding"/>
    <property type="evidence" value="ECO:0007669"/>
    <property type="project" value="TreeGrafter"/>
</dbReference>
<dbReference type="GO" id="GO:0003957">
    <property type="term" value="F:NAD(P)+ transhydrogenase (Si-specific) activity"/>
    <property type="evidence" value="ECO:0007669"/>
    <property type="project" value="UniProtKB-UniRule"/>
</dbReference>
<dbReference type="GO" id="GO:0006103">
    <property type="term" value="P:2-oxoglutarate metabolic process"/>
    <property type="evidence" value="ECO:0007669"/>
    <property type="project" value="TreeGrafter"/>
</dbReference>
<dbReference type="GO" id="GO:0006739">
    <property type="term" value="P:NADP metabolic process"/>
    <property type="evidence" value="ECO:0007669"/>
    <property type="project" value="UniProtKB-UniRule"/>
</dbReference>
<dbReference type="FunFam" id="3.30.390.30:FF:000002">
    <property type="entry name" value="Soluble pyridine nucleotide transhydrogenase"/>
    <property type="match status" value="1"/>
</dbReference>
<dbReference type="FunFam" id="3.50.50.60:FF:000008">
    <property type="entry name" value="Soluble pyridine nucleotide transhydrogenase"/>
    <property type="match status" value="1"/>
</dbReference>
<dbReference type="Gene3D" id="3.30.390.30">
    <property type="match status" value="1"/>
</dbReference>
<dbReference type="Gene3D" id="3.50.50.60">
    <property type="entry name" value="FAD/NAD(P)-binding domain"/>
    <property type="match status" value="2"/>
</dbReference>
<dbReference type="HAMAP" id="MF_00247">
    <property type="entry name" value="SthA"/>
    <property type="match status" value="1"/>
</dbReference>
<dbReference type="InterPro" id="IPR050151">
    <property type="entry name" value="Class-I_Pyr_Nuc-Dis_Oxidored"/>
</dbReference>
<dbReference type="InterPro" id="IPR036188">
    <property type="entry name" value="FAD/NAD-bd_sf"/>
</dbReference>
<dbReference type="InterPro" id="IPR023753">
    <property type="entry name" value="FAD/NAD-binding_dom"/>
</dbReference>
<dbReference type="InterPro" id="IPR016156">
    <property type="entry name" value="FAD/NAD-linked_Rdtase_dimer_sf"/>
</dbReference>
<dbReference type="InterPro" id="IPR001100">
    <property type="entry name" value="Pyr_nuc-diS_OxRdtase"/>
</dbReference>
<dbReference type="InterPro" id="IPR004099">
    <property type="entry name" value="Pyr_nucl-diS_OxRdtase_dimer"/>
</dbReference>
<dbReference type="InterPro" id="IPR022962">
    <property type="entry name" value="STH_gammaproteobact"/>
</dbReference>
<dbReference type="NCBIfam" id="NF003585">
    <property type="entry name" value="PRK05249.1"/>
    <property type="match status" value="1"/>
</dbReference>
<dbReference type="PANTHER" id="PTHR22912">
    <property type="entry name" value="DISULFIDE OXIDOREDUCTASE"/>
    <property type="match status" value="1"/>
</dbReference>
<dbReference type="PANTHER" id="PTHR22912:SF93">
    <property type="entry name" value="SOLUBLE PYRIDINE NUCLEOTIDE TRANSHYDROGENASE"/>
    <property type="match status" value="1"/>
</dbReference>
<dbReference type="Pfam" id="PF07992">
    <property type="entry name" value="Pyr_redox_2"/>
    <property type="match status" value="1"/>
</dbReference>
<dbReference type="Pfam" id="PF02852">
    <property type="entry name" value="Pyr_redox_dim"/>
    <property type="match status" value="1"/>
</dbReference>
<dbReference type="PIRSF" id="PIRSF000350">
    <property type="entry name" value="Mercury_reductase_MerA"/>
    <property type="match status" value="1"/>
</dbReference>
<dbReference type="PRINTS" id="PR00368">
    <property type="entry name" value="FADPNR"/>
</dbReference>
<dbReference type="PRINTS" id="PR00411">
    <property type="entry name" value="PNDRDTASEI"/>
</dbReference>
<dbReference type="SUPFAM" id="SSF51905">
    <property type="entry name" value="FAD/NAD(P)-binding domain"/>
    <property type="match status" value="1"/>
</dbReference>
<dbReference type="SUPFAM" id="SSF55424">
    <property type="entry name" value="FAD/NAD-linked reductases, dimerisation (C-terminal) domain"/>
    <property type="match status" value="1"/>
</dbReference>
<name>STHA_VIBA3</name>
<feature type="chain" id="PRO_1000193461" description="Soluble pyridine nucleotide transhydrogenase">
    <location>
        <begin position="1"/>
        <end position="466"/>
    </location>
</feature>
<feature type="binding site" evidence="1">
    <location>
        <begin position="36"/>
        <end position="45"/>
    </location>
    <ligand>
        <name>FAD</name>
        <dbReference type="ChEBI" id="CHEBI:57692"/>
    </ligand>
</feature>
<gene>
    <name evidence="1" type="primary">sthA</name>
    <name type="ordered locus">VS_3003</name>
</gene>
<reference key="1">
    <citation type="submission" date="2009-02" db="EMBL/GenBank/DDBJ databases">
        <title>Vibrio splendidus str. LGP32 complete genome.</title>
        <authorList>
            <person name="Mazel D."/>
            <person name="Le Roux F."/>
        </authorList>
    </citation>
    <scope>NUCLEOTIDE SEQUENCE [LARGE SCALE GENOMIC DNA]</scope>
    <source>
        <strain>LGP32</strain>
    </source>
</reference>
<keyword id="KW-0963">Cytoplasm</keyword>
<keyword id="KW-0274">FAD</keyword>
<keyword id="KW-0285">Flavoprotein</keyword>
<keyword id="KW-0520">NAD</keyword>
<keyword id="KW-0521">NADP</keyword>
<keyword id="KW-0560">Oxidoreductase</keyword>
<proteinExistence type="inferred from homology"/>